<accession>A3PRP4</accession>
<comment type="function">
    <text evidence="1">Part of a membrane-bound complex that couples electron transfer with translocation of ions across the membrane.</text>
</comment>
<comment type="cofactor">
    <cofactor evidence="1">
        <name>[4Fe-4S] cluster</name>
        <dbReference type="ChEBI" id="CHEBI:49883"/>
    </cofactor>
    <text evidence="1">Binds 3 [4Fe-4S] clusters.</text>
</comment>
<comment type="subunit">
    <text evidence="1">The complex is composed of six subunits: RnfA, RnfB, RnfC, RnfD, RnfE and RnfG.</text>
</comment>
<comment type="subcellular location">
    <subcellularLocation>
        <location evidence="1">Cellular chromatophore membrane</location>
        <topology evidence="1">Peripheral membrane protein</topology>
        <orientation evidence="1">Cytoplasmic side</orientation>
    </subcellularLocation>
</comment>
<comment type="similarity">
    <text evidence="1">Belongs to the 4Fe4S bacterial-type ferredoxin family. RnfB subfamily.</text>
</comment>
<protein>
    <recommendedName>
        <fullName evidence="1">Ion-translocating oxidoreductase complex subunit B</fullName>
        <ecNumber evidence="1">7.-.-.-</ecNumber>
    </recommendedName>
    <alternativeName>
        <fullName evidence="1">Rnf electron transport complex subunit B</fullName>
    </alternativeName>
</protein>
<gene>
    <name evidence="1" type="primary">rnfB</name>
    <name type="ordered locus">Rsph17029_3932</name>
</gene>
<organism>
    <name type="scientific">Cereibacter sphaeroides (strain ATCC 17029 / ATH 2.4.9)</name>
    <name type="common">Rhodobacter sphaeroides</name>
    <dbReference type="NCBI Taxonomy" id="349101"/>
    <lineage>
        <taxon>Bacteria</taxon>
        <taxon>Pseudomonadati</taxon>
        <taxon>Pseudomonadota</taxon>
        <taxon>Alphaproteobacteria</taxon>
        <taxon>Rhodobacterales</taxon>
        <taxon>Paracoccaceae</taxon>
        <taxon>Cereibacter</taxon>
    </lineage>
</organism>
<dbReference type="EC" id="7.-.-.-" evidence="1"/>
<dbReference type="EMBL" id="CP000578">
    <property type="protein sequence ID" value="ABN79010.1"/>
    <property type="molecule type" value="Genomic_DNA"/>
</dbReference>
<dbReference type="RefSeq" id="WP_011842752.1">
    <property type="nucleotide sequence ID" value="NC_009050.1"/>
</dbReference>
<dbReference type="KEGG" id="rsh:Rsph17029_3932"/>
<dbReference type="HOGENOM" id="CLU_063448_2_0_5"/>
<dbReference type="GO" id="GO:0005886">
    <property type="term" value="C:plasma membrane"/>
    <property type="evidence" value="ECO:0007669"/>
    <property type="project" value="InterPro"/>
</dbReference>
<dbReference type="GO" id="GO:0042717">
    <property type="term" value="C:plasma membrane-derived chromatophore membrane"/>
    <property type="evidence" value="ECO:0007669"/>
    <property type="project" value="UniProtKB-SubCell"/>
</dbReference>
<dbReference type="GO" id="GO:0051539">
    <property type="term" value="F:4 iron, 4 sulfur cluster binding"/>
    <property type="evidence" value="ECO:0007669"/>
    <property type="project" value="UniProtKB-UniRule"/>
</dbReference>
<dbReference type="GO" id="GO:0009055">
    <property type="term" value="F:electron transfer activity"/>
    <property type="evidence" value="ECO:0007669"/>
    <property type="project" value="InterPro"/>
</dbReference>
<dbReference type="GO" id="GO:0046872">
    <property type="term" value="F:metal ion binding"/>
    <property type="evidence" value="ECO:0007669"/>
    <property type="project" value="UniProtKB-KW"/>
</dbReference>
<dbReference type="GO" id="GO:0022900">
    <property type="term" value="P:electron transport chain"/>
    <property type="evidence" value="ECO:0007669"/>
    <property type="project" value="UniProtKB-UniRule"/>
</dbReference>
<dbReference type="GO" id="GO:0009399">
    <property type="term" value="P:nitrogen fixation"/>
    <property type="evidence" value="ECO:0007669"/>
    <property type="project" value="UniProtKB-UniRule"/>
</dbReference>
<dbReference type="Gene3D" id="3.30.70.20">
    <property type="match status" value="1"/>
</dbReference>
<dbReference type="Gene3D" id="1.10.15.40">
    <property type="entry name" value="Electron transport complex subunit B, putative Fe-S cluster"/>
    <property type="match status" value="1"/>
</dbReference>
<dbReference type="HAMAP" id="MF_00463">
    <property type="entry name" value="RsxB_RnfB"/>
    <property type="match status" value="1"/>
</dbReference>
<dbReference type="InterPro" id="IPR007202">
    <property type="entry name" value="4Fe-4S_dom"/>
</dbReference>
<dbReference type="InterPro" id="IPR017896">
    <property type="entry name" value="4Fe4S_Fe-S-bd"/>
</dbReference>
<dbReference type="InterPro" id="IPR017900">
    <property type="entry name" value="4Fe4S_Fe_S_CS"/>
</dbReference>
<dbReference type="InterPro" id="IPR050395">
    <property type="entry name" value="4Fe4S_Ferredoxin_RnfB"/>
</dbReference>
<dbReference type="InterPro" id="IPR010207">
    <property type="entry name" value="Elect_transpt_cplx_RnfB/RsxB"/>
</dbReference>
<dbReference type="InterPro" id="IPR016463">
    <property type="entry name" value="RnfB/RsxB_Proteobac"/>
</dbReference>
<dbReference type="NCBIfam" id="TIGR01944">
    <property type="entry name" value="rnfB"/>
    <property type="match status" value="1"/>
</dbReference>
<dbReference type="PANTHER" id="PTHR43560">
    <property type="entry name" value="ION-TRANSLOCATING OXIDOREDUCTASE COMPLEX SUBUNIT B"/>
    <property type="match status" value="1"/>
</dbReference>
<dbReference type="PANTHER" id="PTHR43560:SF1">
    <property type="entry name" value="ION-TRANSLOCATING OXIDOREDUCTASE COMPLEX SUBUNIT B"/>
    <property type="match status" value="1"/>
</dbReference>
<dbReference type="Pfam" id="PF14697">
    <property type="entry name" value="Fer4_21"/>
    <property type="match status" value="1"/>
</dbReference>
<dbReference type="Pfam" id="PF04060">
    <property type="entry name" value="FeS"/>
    <property type="match status" value="1"/>
</dbReference>
<dbReference type="PIRSF" id="PIRSF005784">
    <property type="entry name" value="Elect_transpt_RnfB"/>
    <property type="match status" value="1"/>
</dbReference>
<dbReference type="SUPFAM" id="SSF54862">
    <property type="entry name" value="4Fe-4S ferredoxins"/>
    <property type="match status" value="1"/>
</dbReference>
<dbReference type="PROSITE" id="PS51656">
    <property type="entry name" value="4FE4S"/>
    <property type="match status" value="1"/>
</dbReference>
<dbReference type="PROSITE" id="PS00198">
    <property type="entry name" value="4FE4S_FER_1"/>
    <property type="match status" value="2"/>
</dbReference>
<dbReference type="PROSITE" id="PS51379">
    <property type="entry name" value="4FE4S_FER_2"/>
    <property type="match status" value="2"/>
</dbReference>
<evidence type="ECO:0000255" key="1">
    <source>
        <dbReference type="HAMAP-Rule" id="MF_00463"/>
    </source>
</evidence>
<feature type="chain" id="PRO_1000194490" description="Ion-translocating oxidoreductase complex subunit B">
    <location>
        <begin position="1"/>
        <end position="188"/>
    </location>
</feature>
<feature type="domain" description="4Fe-4S" evidence="1">
    <location>
        <begin position="29"/>
        <end position="88"/>
    </location>
</feature>
<feature type="domain" description="4Fe-4S ferredoxin-type 1" evidence="1">
    <location>
        <begin position="104"/>
        <end position="133"/>
    </location>
</feature>
<feature type="domain" description="4Fe-4S ferredoxin-type 2" evidence="1">
    <location>
        <begin position="134"/>
        <end position="163"/>
    </location>
</feature>
<feature type="region of interest" description="Hydrophobic" evidence="1">
    <location>
        <begin position="1"/>
        <end position="23"/>
    </location>
</feature>
<feature type="binding site" evidence="1">
    <location>
        <position position="46"/>
    </location>
    <ligand>
        <name>[4Fe-4S] cluster</name>
        <dbReference type="ChEBI" id="CHEBI:49883"/>
        <label>1</label>
    </ligand>
</feature>
<feature type="binding site" evidence="1">
    <location>
        <position position="49"/>
    </location>
    <ligand>
        <name>[4Fe-4S] cluster</name>
        <dbReference type="ChEBI" id="CHEBI:49883"/>
        <label>1</label>
    </ligand>
</feature>
<feature type="binding site" evidence="1">
    <location>
        <position position="54"/>
    </location>
    <ligand>
        <name>[4Fe-4S] cluster</name>
        <dbReference type="ChEBI" id="CHEBI:49883"/>
        <label>1</label>
    </ligand>
</feature>
<feature type="binding site" evidence="1">
    <location>
        <position position="71"/>
    </location>
    <ligand>
        <name>[4Fe-4S] cluster</name>
        <dbReference type="ChEBI" id="CHEBI:49883"/>
        <label>1</label>
    </ligand>
</feature>
<feature type="binding site" evidence="1">
    <location>
        <position position="113"/>
    </location>
    <ligand>
        <name>[4Fe-4S] cluster</name>
        <dbReference type="ChEBI" id="CHEBI:49883"/>
        <label>2</label>
    </ligand>
</feature>
<feature type="binding site" evidence="1">
    <location>
        <position position="116"/>
    </location>
    <ligand>
        <name>[4Fe-4S] cluster</name>
        <dbReference type="ChEBI" id="CHEBI:49883"/>
        <label>2</label>
    </ligand>
</feature>
<feature type="binding site" evidence="1">
    <location>
        <position position="119"/>
    </location>
    <ligand>
        <name>[4Fe-4S] cluster</name>
        <dbReference type="ChEBI" id="CHEBI:49883"/>
        <label>2</label>
    </ligand>
</feature>
<feature type="binding site" evidence="1">
    <location>
        <position position="123"/>
    </location>
    <ligand>
        <name>[4Fe-4S] cluster</name>
        <dbReference type="ChEBI" id="CHEBI:49883"/>
        <label>3</label>
    </ligand>
</feature>
<feature type="binding site" evidence="1">
    <location>
        <position position="143"/>
    </location>
    <ligand>
        <name>[4Fe-4S] cluster</name>
        <dbReference type="ChEBI" id="CHEBI:49883"/>
        <label>3</label>
    </ligand>
</feature>
<feature type="binding site" evidence="1">
    <location>
        <position position="146"/>
    </location>
    <ligand>
        <name>[4Fe-4S] cluster</name>
        <dbReference type="ChEBI" id="CHEBI:49883"/>
        <label>3</label>
    </ligand>
</feature>
<feature type="binding site" evidence="1">
    <location>
        <position position="149"/>
    </location>
    <ligand>
        <name>[4Fe-4S] cluster</name>
        <dbReference type="ChEBI" id="CHEBI:49883"/>
        <label>3</label>
    </ligand>
</feature>
<feature type="binding site" evidence="1">
    <location>
        <position position="153"/>
    </location>
    <ligand>
        <name>[4Fe-4S] cluster</name>
        <dbReference type="ChEBI" id="CHEBI:49883"/>
        <label>2</label>
    </ligand>
</feature>
<proteinExistence type="inferred from homology"/>
<keyword id="KW-0004">4Fe-4S</keyword>
<keyword id="KW-0249">Electron transport</keyword>
<keyword id="KW-0408">Iron</keyword>
<keyword id="KW-0411">Iron-sulfur</keyword>
<keyword id="KW-0472">Membrane</keyword>
<keyword id="KW-0479">Metal-binding</keyword>
<keyword id="KW-0535">Nitrogen fixation</keyword>
<keyword id="KW-0677">Repeat</keyword>
<keyword id="KW-1278">Translocase</keyword>
<keyword id="KW-0813">Transport</keyword>
<sequence>MIEAAVSMSALGLGLGLLLGVAARRFHVESPPILDAIEGILPGTNCGACGYPGCRGLAEAMSEGAAPVTACAPGGRDVALALAAIVETDGGGGAVPGMAEAEPTVAFIFEDHCTGCMRCFKRCPTDAIIGANRQIHTVVTDACIGCNACIEACPTEAIVARVKPKTLKSWYWDKPRTAFEARDTEVAA</sequence>
<reference key="1">
    <citation type="submission" date="2007-02" db="EMBL/GenBank/DDBJ databases">
        <title>Complete sequence of chromosome 2 of Rhodobacter sphaeroides ATCC 17029.</title>
        <authorList>
            <person name="Copeland A."/>
            <person name="Lucas S."/>
            <person name="Lapidus A."/>
            <person name="Barry K."/>
            <person name="Detter J.C."/>
            <person name="Glavina del Rio T."/>
            <person name="Hammon N."/>
            <person name="Israni S."/>
            <person name="Dalin E."/>
            <person name="Tice H."/>
            <person name="Pitluck S."/>
            <person name="Kiss H."/>
            <person name="Brettin T."/>
            <person name="Bruce D."/>
            <person name="Han C."/>
            <person name="Tapia R."/>
            <person name="Gilna P."/>
            <person name="Schmutz J."/>
            <person name="Larimer F."/>
            <person name="Land M."/>
            <person name="Hauser L."/>
            <person name="Kyrpides N."/>
            <person name="Mikhailova N."/>
            <person name="Richardson P."/>
            <person name="Mackenzie C."/>
            <person name="Choudhary M."/>
            <person name="Donohue T.J."/>
            <person name="Kaplan S."/>
        </authorList>
    </citation>
    <scope>NUCLEOTIDE SEQUENCE [LARGE SCALE GENOMIC DNA]</scope>
    <source>
        <strain>ATCC 17029 / ATH 2.4.9</strain>
    </source>
</reference>
<name>RNFB_CERS1</name>